<name>PLSX_CLOD6</name>
<accession>Q18B41</accession>
<sequence>MKIVIDGMGGDNAPKSNVEGAVNAIKEYQVDLIITGDKDLLEKEFSNYEFDRNKLEIVHTTEIIENEDKPVKAIRSKKDSSMVVALNLVKEGKADAIISAGNTGALLAGGLFVVGRIKGIDRPCLCSAIPNVKRGMTLIADCGANADCKPKNLVEFAAMSNIYSRKVLGLENPKVALANVGLEEGKGNDLVKRSYEEIKKLDLNFIGNVEAREVINAYTDIIICDGFTGNILLKSAEGVALSVMSLIKETFMASTKSKIGALLIKDDLRKLKSFIDYSEYGGAPLLGLNGGVIKAHGSSDAKAIKNAINQGIKFSKGKVVEDINQFISKYNEENKNNEDE</sequence>
<proteinExistence type="inferred from homology"/>
<dbReference type="EC" id="2.3.1.274" evidence="1"/>
<dbReference type="EMBL" id="AM180355">
    <property type="protein sequence ID" value="CAJ68032.1"/>
    <property type="molecule type" value="Genomic_DNA"/>
</dbReference>
<dbReference type="RefSeq" id="WP_003428446.1">
    <property type="nucleotide sequence ID" value="NZ_JAUPES010000024.1"/>
</dbReference>
<dbReference type="RefSeq" id="YP_001087671.1">
    <property type="nucleotide sequence ID" value="NC_009089.1"/>
</dbReference>
<dbReference type="SMR" id="Q18B41"/>
<dbReference type="STRING" id="272563.CD630_11780"/>
<dbReference type="EnsemblBacteria" id="CAJ68032">
    <property type="protein sequence ID" value="CAJ68032"/>
    <property type="gene ID" value="CD630_11780"/>
</dbReference>
<dbReference type="GeneID" id="66353589"/>
<dbReference type="KEGG" id="cdf:CD630_11780"/>
<dbReference type="KEGG" id="pdc:CDIF630_01327"/>
<dbReference type="PATRIC" id="fig|272563.120.peg.1229"/>
<dbReference type="eggNOG" id="COG0416">
    <property type="taxonomic scope" value="Bacteria"/>
</dbReference>
<dbReference type="OrthoDB" id="9806408at2"/>
<dbReference type="PhylomeDB" id="Q18B41"/>
<dbReference type="BioCyc" id="PDIF272563:G12WB-1309-MONOMER"/>
<dbReference type="UniPathway" id="UPA00085"/>
<dbReference type="Proteomes" id="UP000001978">
    <property type="component" value="Chromosome"/>
</dbReference>
<dbReference type="GO" id="GO:0005737">
    <property type="term" value="C:cytoplasm"/>
    <property type="evidence" value="ECO:0007669"/>
    <property type="project" value="UniProtKB-SubCell"/>
</dbReference>
<dbReference type="GO" id="GO:0043811">
    <property type="term" value="F:phosphate:acyl-[acyl carrier protein] acyltransferase activity"/>
    <property type="evidence" value="ECO:0007669"/>
    <property type="project" value="UniProtKB-UniRule"/>
</dbReference>
<dbReference type="GO" id="GO:0006633">
    <property type="term" value="P:fatty acid biosynthetic process"/>
    <property type="evidence" value="ECO:0007669"/>
    <property type="project" value="UniProtKB-UniRule"/>
</dbReference>
<dbReference type="GO" id="GO:0008654">
    <property type="term" value="P:phospholipid biosynthetic process"/>
    <property type="evidence" value="ECO:0007669"/>
    <property type="project" value="UniProtKB-KW"/>
</dbReference>
<dbReference type="Gene3D" id="3.40.718.10">
    <property type="entry name" value="Isopropylmalate Dehydrogenase"/>
    <property type="match status" value="1"/>
</dbReference>
<dbReference type="HAMAP" id="MF_00019">
    <property type="entry name" value="PlsX"/>
    <property type="match status" value="1"/>
</dbReference>
<dbReference type="InterPro" id="IPR003664">
    <property type="entry name" value="FA_synthesis"/>
</dbReference>
<dbReference type="InterPro" id="IPR012281">
    <property type="entry name" value="Phospholipid_synth_PlsX-like"/>
</dbReference>
<dbReference type="NCBIfam" id="TIGR00182">
    <property type="entry name" value="plsX"/>
    <property type="match status" value="1"/>
</dbReference>
<dbReference type="PANTHER" id="PTHR30100">
    <property type="entry name" value="FATTY ACID/PHOSPHOLIPID SYNTHESIS PROTEIN PLSX"/>
    <property type="match status" value="1"/>
</dbReference>
<dbReference type="PANTHER" id="PTHR30100:SF1">
    <property type="entry name" value="PHOSPHATE ACYLTRANSFERASE"/>
    <property type="match status" value="1"/>
</dbReference>
<dbReference type="Pfam" id="PF02504">
    <property type="entry name" value="FA_synthesis"/>
    <property type="match status" value="1"/>
</dbReference>
<dbReference type="PIRSF" id="PIRSF002465">
    <property type="entry name" value="Phsphlp_syn_PlsX"/>
    <property type="match status" value="1"/>
</dbReference>
<dbReference type="SUPFAM" id="SSF53659">
    <property type="entry name" value="Isocitrate/Isopropylmalate dehydrogenase-like"/>
    <property type="match status" value="1"/>
</dbReference>
<comment type="function">
    <text evidence="1">Catalyzes the reversible formation of acyl-phosphate (acyl-PO(4)) from acyl-[acyl-carrier-protein] (acyl-ACP). This enzyme utilizes acyl-ACP as fatty acyl donor, but not acyl-CoA.</text>
</comment>
<comment type="catalytic activity">
    <reaction evidence="1">
        <text>a fatty acyl-[ACP] + phosphate = an acyl phosphate + holo-[ACP]</text>
        <dbReference type="Rhea" id="RHEA:42292"/>
        <dbReference type="Rhea" id="RHEA-COMP:9685"/>
        <dbReference type="Rhea" id="RHEA-COMP:14125"/>
        <dbReference type="ChEBI" id="CHEBI:43474"/>
        <dbReference type="ChEBI" id="CHEBI:59918"/>
        <dbReference type="ChEBI" id="CHEBI:64479"/>
        <dbReference type="ChEBI" id="CHEBI:138651"/>
        <dbReference type="EC" id="2.3.1.274"/>
    </reaction>
</comment>
<comment type="pathway">
    <text evidence="1">Lipid metabolism; phospholipid metabolism.</text>
</comment>
<comment type="subunit">
    <text evidence="1">Homodimer. Probably interacts with PlsY.</text>
</comment>
<comment type="subcellular location">
    <subcellularLocation>
        <location evidence="1">Cytoplasm</location>
    </subcellularLocation>
    <text evidence="1">Associated with the membrane possibly through PlsY.</text>
</comment>
<comment type="similarity">
    <text evidence="1">Belongs to the PlsX family.</text>
</comment>
<protein>
    <recommendedName>
        <fullName evidence="1">Phosphate acyltransferase</fullName>
        <ecNumber evidence="1">2.3.1.274</ecNumber>
    </recommendedName>
    <alternativeName>
        <fullName evidence="1">Acyl-ACP phosphotransacylase</fullName>
    </alternativeName>
    <alternativeName>
        <fullName evidence="1">Acyl-[acyl-carrier-protein]--phosphate acyltransferase</fullName>
    </alternativeName>
    <alternativeName>
        <fullName evidence="1">Phosphate-acyl-ACP acyltransferase</fullName>
    </alternativeName>
</protein>
<keyword id="KW-0963">Cytoplasm</keyword>
<keyword id="KW-0444">Lipid biosynthesis</keyword>
<keyword id="KW-0443">Lipid metabolism</keyword>
<keyword id="KW-0594">Phospholipid biosynthesis</keyword>
<keyword id="KW-1208">Phospholipid metabolism</keyword>
<keyword id="KW-1185">Reference proteome</keyword>
<keyword id="KW-0808">Transferase</keyword>
<organism>
    <name type="scientific">Clostridioides difficile (strain 630)</name>
    <name type="common">Peptoclostridium difficile</name>
    <dbReference type="NCBI Taxonomy" id="272563"/>
    <lineage>
        <taxon>Bacteria</taxon>
        <taxon>Bacillati</taxon>
        <taxon>Bacillota</taxon>
        <taxon>Clostridia</taxon>
        <taxon>Peptostreptococcales</taxon>
        <taxon>Peptostreptococcaceae</taxon>
        <taxon>Clostridioides</taxon>
    </lineage>
</organism>
<evidence type="ECO:0000255" key="1">
    <source>
        <dbReference type="HAMAP-Rule" id="MF_00019"/>
    </source>
</evidence>
<feature type="chain" id="PRO_1000001748" description="Phosphate acyltransferase">
    <location>
        <begin position="1"/>
        <end position="340"/>
    </location>
</feature>
<reference key="1">
    <citation type="journal article" date="2006" name="Nat. Genet.">
        <title>The multidrug-resistant human pathogen Clostridium difficile has a highly mobile, mosaic genome.</title>
        <authorList>
            <person name="Sebaihia M."/>
            <person name="Wren B.W."/>
            <person name="Mullany P."/>
            <person name="Fairweather N.F."/>
            <person name="Minton N."/>
            <person name="Stabler R."/>
            <person name="Thomson N.R."/>
            <person name="Roberts A.P."/>
            <person name="Cerdeno-Tarraga A.M."/>
            <person name="Wang H."/>
            <person name="Holden M.T.G."/>
            <person name="Wright A."/>
            <person name="Churcher C."/>
            <person name="Quail M.A."/>
            <person name="Baker S."/>
            <person name="Bason N."/>
            <person name="Brooks K."/>
            <person name="Chillingworth T."/>
            <person name="Cronin A."/>
            <person name="Davis P."/>
            <person name="Dowd L."/>
            <person name="Fraser A."/>
            <person name="Feltwell T."/>
            <person name="Hance Z."/>
            <person name="Holroyd S."/>
            <person name="Jagels K."/>
            <person name="Moule S."/>
            <person name="Mungall K."/>
            <person name="Price C."/>
            <person name="Rabbinowitsch E."/>
            <person name="Sharp S."/>
            <person name="Simmonds M."/>
            <person name="Stevens K."/>
            <person name="Unwin L."/>
            <person name="Whithead S."/>
            <person name="Dupuy B."/>
            <person name="Dougan G."/>
            <person name="Barrell B."/>
            <person name="Parkhill J."/>
        </authorList>
    </citation>
    <scope>NUCLEOTIDE SEQUENCE [LARGE SCALE GENOMIC DNA]</scope>
    <source>
        <strain>630</strain>
    </source>
</reference>
<gene>
    <name evidence="1" type="primary">plsX</name>
    <name type="ordered locus">CD630_11780</name>
</gene>